<comment type="function">
    <text evidence="1">Involved in the glycolate utilization. Catalyzes the condensation and subsequent hydrolysis of acetyl-coenzyme A (acetyl-CoA) and glyoxylate to form malate and CoA.</text>
</comment>
<comment type="catalytic activity">
    <reaction evidence="1">
        <text>glyoxylate + acetyl-CoA + H2O = (S)-malate + CoA + H(+)</text>
        <dbReference type="Rhea" id="RHEA:18181"/>
        <dbReference type="ChEBI" id="CHEBI:15377"/>
        <dbReference type="ChEBI" id="CHEBI:15378"/>
        <dbReference type="ChEBI" id="CHEBI:15589"/>
        <dbReference type="ChEBI" id="CHEBI:36655"/>
        <dbReference type="ChEBI" id="CHEBI:57287"/>
        <dbReference type="ChEBI" id="CHEBI:57288"/>
        <dbReference type="EC" id="2.3.3.9"/>
    </reaction>
</comment>
<comment type="cofactor">
    <cofactor evidence="1">
        <name>Mg(2+)</name>
        <dbReference type="ChEBI" id="CHEBI:18420"/>
    </cofactor>
</comment>
<comment type="pathway">
    <text evidence="1">Carbohydrate metabolism; glyoxylate cycle; (S)-malate from isocitrate: step 2/2.</text>
</comment>
<comment type="subunit">
    <text evidence="1">Monomer.</text>
</comment>
<comment type="subcellular location">
    <subcellularLocation>
        <location evidence="1">Cytoplasm</location>
    </subcellularLocation>
</comment>
<comment type="similarity">
    <text evidence="1">Belongs to the malate synthase family. GlcB subfamily.</text>
</comment>
<name>MASZ_MYCVP</name>
<proteinExistence type="inferred from homology"/>
<feature type="chain" id="PRO_1000056912" description="Malate synthase G">
    <location>
        <begin position="1"/>
        <end position="734"/>
    </location>
</feature>
<feature type="active site" description="Proton acceptor" evidence="1">
    <location>
        <position position="345"/>
    </location>
</feature>
<feature type="active site" description="Proton donor" evidence="1">
    <location>
        <position position="639"/>
    </location>
</feature>
<feature type="binding site" evidence="1">
    <location>
        <position position="118"/>
    </location>
    <ligand>
        <name>acetyl-CoA</name>
        <dbReference type="ChEBI" id="CHEBI:57288"/>
    </ligand>
</feature>
<feature type="binding site" evidence="1">
    <location>
        <begin position="125"/>
        <end position="126"/>
    </location>
    <ligand>
        <name>acetyl-CoA</name>
        <dbReference type="ChEBI" id="CHEBI:57288"/>
    </ligand>
</feature>
<feature type="binding site" evidence="1">
    <location>
        <position position="276"/>
    </location>
    <ligand>
        <name>acetyl-CoA</name>
        <dbReference type="ChEBI" id="CHEBI:57288"/>
    </ligand>
</feature>
<feature type="binding site" evidence="1">
    <location>
        <position position="313"/>
    </location>
    <ligand>
        <name>acetyl-CoA</name>
        <dbReference type="ChEBI" id="CHEBI:57288"/>
    </ligand>
</feature>
<feature type="binding site" evidence="1">
    <location>
        <position position="345"/>
    </location>
    <ligand>
        <name>glyoxylate</name>
        <dbReference type="ChEBI" id="CHEBI:36655"/>
    </ligand>
</feature>
<feature type="binding site" evidence="1">
    <location>
        <position position="440"/>
    </location>
    <ligand>
        <name>glyoxylate</name>
        <dbReference type="ChEBI" id="CHEBI:36655"/>
    </ligand>
</feature>
<feature type="binding site" evidence="1">
    <location>
        <position position="440"/>
    </location>
    <ligand>
        <name>Mg(2+)</name>
        <dbReference type="ChEBI" id="CHEBI:18420"/>
    </ligand>
</feature>
<feature type="binding site" evidence="1">
    <location>
        <begin position="465"/>
        <end position="468"/>
    </location>
    <ligand>
        <name>glyoxylate</name>
        <dbReference type="ChEBI" id="CHEBI:36655"/>
    </ligand>
</feature>
<feature type="binding site" evidence="1">
    <location>
        <position position="468"/>
    </location>
    <ligand>
        <name>Mg(2+)</name>
        <dbReference type="ChEBI" id="CHEBI:18420"/>
    </ligand>
</feature>
<feature type="binding site" evidence="1">
    <location>
        <position position="549"/>
    </location>
    <ligand>
        <name>acetyl-CoA</name>
        <dbReference type="ChEBI" id="CHEBI:57288"/>
    </ligand>
</feature>
<feature type="modified residue" description="Cysteine sulfenic acid (-SOH)" evidence="1">
    <location>
        <position position="625"/>
    </location>
</feature>
<gene>
    <name evidence="1" type="primary">glcB</name>
    <name type="ordered locus">Mvan_3097</name>
</gene>
<dbReference type="EC" id="2.3.3.9" evidence="1"/>
<dbReference type="EMBL" id="CP000511">
    <property type="protein sequence ID" value="ABM13899.1"/>
    <property type="molecule type" value="Genomic_DNA"/>
</dbReference>
<dbReference type="RefSeq" id="WP_011780304.1">
    <property type="nucleotide sequence ID" value="NZ_JACKSD010000227.1"/>
</dbReference>
<dbReference type="SMR" id="A1T9P9"/>
<dbReference type="STRING" id="350058.Mvan_3097"/>
<dbReference type="KEGG" id="mva:Mvan_3097"/>
<dbReference type="eggNOG" id="COG2225">
    <property type="taxonomic scope" value="Bacteria"/>
</dbReference>
<dbReference type="HOGENOM" id="CLU_028446_1_0_11"/>
<dbReference type="UniPathway" id="UPA00703">
    <property type="reaction ID" value="UER00720"/>
</dbReference>
<dbReference type="Proteomes" id="UP000009159">
    <property type="component" value="Chromosome"/>
</dbReference>
<dbReference type="GO" id="GO:0005829">
    <property type="term" value="C:cytosol"/>
    <property type="evidence" value="ECO:0007669"/>
    <property type="project" value="TreeGrafter"/>
</dbReference>
<dbReference type="GO" id="GO:0000287">
    <property type="term" value="F:magnesium ion binding"/>
    <property type="evidence" value="ECO:0007669"/>
    <property type="project" value="TreeGrafter"/>
</dbReference>
<dbReference type="GO" id="GO:0004474">
    <property type="term" value="F:malate synthase activity"/>
    <property type="evidence" value="ECO:0007669"/>
    <property type="project" value="UniProtKB-UniRule"/>
</dbReference>
<dbReference type="GO" id="GO:0009436">
    <property type="term" value="P:glyoxylate catabolic process"/>
    <property type="evidence" value="ECO:0007669"/>
    <property type="project" value="TreeGrafter"/>
</dbReference>
<dbReference type="GO" id="GO:0006097">
    <property type="term" value="P:glyoxylate cycle"/>
    <property type="evidence" value="ECO:0007669"/>
    <property type="project" value="UniProtKB-UniRule"/>
</dbReference>
<dbReference type="GO" id="GO:0006099">
    <property type="term" value="P:tricarboxylic acid cycle"/>
    <property type="evidence" value="ECO:0007669"/>
    <property type="project" value="UniProtKB-KW"/>
</dbReference>
<dbReference type="CDD" id="cd00728">
    <property type="entry name" value="malate_synt_G"/>
    <property type="match status" value="1"/>
</dbReference>
<dbReference type="FunFam" id="3.20.20.360:FF:000002">
    <property type="entry name" value="Malate synthase G"/>
    <property type="match status" value="1"/>
</dbReference>
<dbReference type="Gene3D" id="3.20.20.360">
    <property type="entry name" value="Malate synthase, domain 3"/>
    <property type="match status" value="2"/>
</dbReference>
<dbReference type="Gene3D" id="1.20.1220.12">
    <property type="entry name" value="Malate synthase, domain III"/>
    <property type="match status" value="1"/>
</dbReference>
<dbReference type="HAMAP" id="MF_00641">
    <property type="entry name" value="Malate_synth_G"/>
    <property type="match status" value="1"/>
</dbReference>
<dbReference type="InterPro" id="IPR044856">
    <property type="entry name" value="Malate_synth_C_sf"/>
</dbReference>
<dbReference type="InterPro" id="IPR011076">
    <property type="entry name" value="Malate_synth_sf"/>
</dbReference>
<dbReference type="InterPro" id="IPR001465">
    <property type="entry name" value="Malate_synthase_TIM"/>
</dbReference>
<dbReference type="InterPro" id="IPR006253">
    <property type="entry name" value="Malate_synthG"/>
</dbReference>
<dbReference type="InterPro" id="IPR048355">
    <property type="entry name" value="MS_C"/>
</dbReference>
<dbReference type="InterPro" id="IPR048356">
    <property type="entry name" value="MS_N"/>
</dbReference>
<dbReference type="InterPro" id="IPR046363">
    <property type="entry name" value="MS_N_TIM-barrel_dom"/>
</dbReference>
<dbReference type="InterPro" id="IPR048357">
    <property type="entry name" value="MSG_insertion"/>
</dbReference>
<dbReference type="NCBIfam" id="TIGR01345">
    <property type="entry name" value="malate_syn_G"/>
    <property type="match status" value="1"/>
</dbReference>
<dbReference type="NCBIfam" id="NF002825">
    <property type="entry name" value="PRK02999.1"/>
    <property type="match status" value="1"/>
</dbReference>
<dbReference type="PANTHER" id="PTHR42739">
    <property type="entry name" value="MALATE SYNTHASE G"/>
    <property type="match status" value="1"/>
</dbReference>
<dbReference type="PANTHER" id="PTHR42739:SF1">
    <property type="entry name" value="MALATE SYNTHASE G"/>
    <property type="match status" value="1"/>
</dbReference>
<dbReference type="Pfam" id="PF20659">
    <property type="entry name" value="MS_C"/>
    <property type="match status" value="1"/>
</dbReference>
<dbReference type="Pfam" id="PF20656">
    <property type="entry name" value="MS_N"/>
    <property type="match status" value="1"/>
</dbReference>
<dbReference type="Pfam" id="PF01274">
    <property type="entry name" value="MS_TIM-barrel"/>
    <property type="match status" value="1"/>
</dbReference>
<dbReference type="Pfam" id="PF20658">
    <property type="entry name" value="MSG_insertion"/>
    <property type="match status" value="1"/>
</dbReference>
<dbReference type="SUPFAM" id="SSF51645">
    <property type="entry name" value="Malate synthase G"/>
    <property type="match status" value="1"/>
</dbReference>
<evidence type="ECO:0000255" key="1">
    <source>
        <dbReference type="HAMAP-Rule" id="MF_00641"/>
    </source>
</evidence>
<keyword id="KW-0963">Cytoplasm</keyword>
<keyword id="KW-0329">Glyoxylate bypass</keyword>
<keyword id="KW-0460">Magnesium</keyword>
<keyword id="KW-0479">Metal-binding</keyword>
<keyword id="KW-0558">Oxidation</keyword>
<keyword id="KW-0808">Transferase</keyword>
<keyword id="KW-0816">Tricarboxylic acid cycle</keyword>
<accession>A1T9P9</accession>
<reference key="1">
    <citation type="submission" date="2006-12" db="EMBL/GenBank/DDBJ databases">
        <title>Complete sequence of Mycobacterium vanbaalenii PYR-1.</title>
        <authorList>
            <consortium name="US DOE Joint Genome Institute"/>
            <person name="Copeland A."/>
            <person name="Lucas S."/>
            <person name="Lapidus A."/>
            <person name="Barry K."/>
            <person name="Detter J.C."/>
            <person name="Glavina del Rio T."/>
            <person name="Hammon N."/>
            <person name="Israni S."/>
            <person name="Dalin E."/>
            <person name="Tice H."/>
            <person name="Pitluck S."/>
            <person name="Singan V."/>
            <person name="Schmutz J."/>
            <person name="Larimer F."/>
            <person name="Land M."/>
            <person name="Hauser L."/>
            <person name="Kyrpides N."/>
            <person name="Anderson I.J."/>
            <person name="Miller C."/>
            <person name="Richardson P."/>
        </authorList>
    </citation>
    <scope>NUCLEOTIDE SEQUENCE [LARGE SCALE GENOMIC DNA]</scope>
    <source>
        <strain>DSM 7251 / JCM 13017 / BCRC 16820 / KCTC 9966 / NRRL B-24157 / PYR-1</strain>
    </source>
</reference>
<organism>
    <name type="scientific">Mycolicibacterium vanbaalenii (strain DSM 7251 / JCM 13017 / BCRC 16820 / KCTC 9966 / NRRL B-24157 / PYR-1)</name>
    <name type="common">Mycobacterium vanbaalenii</name>
    <dbReference type="NCBI Taxonomy" id="350058"/>
    <lineage>
        <taxon>Bacteria</taxon>
        <taxon>Bacillati</taxon>
        <taxon>Actinomycetota</taxon>
        <taxon>Actinomycetes</taxon>
        <taxon>Mycobacteriales</taxon>
        <taxon>Mycobacteriaceae</taxon>
        <taxon>Mycolicibacterium</taxon>
    </lineage>
</organism>
<protein>
    <recommendedName>
        <fullName evidence="1">Malate synthase G</fullName>
        <ecNumber evidence="1">2.3.3.9</ecNumber>
    </recommendedName>
</protein>
<sequence>MTDRVTVGNLRVAPVLYDFINNEALPGTDIDPDTFWSGVDKVVADLTPRNQDLLARRDDLQAQIDRWHRARVIGGFEPEDYKQFLTDIGYLEPEPADFSITTAGVDDEITTTAGPQLVVPILNARFALNAANARWGSLYDALYGTDVISDEGGAEAGSGYNPVRGDKVIAYARRFLDGAVPLASGSWSDITGLKLDEGQLAATLDDGGTVGLGTPEQFVGYLGDAEAPTAVLLVNNGLHIEILIDAEAPIGATDKAGIKDVVLESAITTIMDFEDSVAAVDADDKVLGYRNWLGLNRGDLAEEVSKGGKTFTRVLNSDRTYTAANPGPDGATELTLPGRSLLFVRNVGHLMTNDAIVDAQGNEIPEGIQDALFTSLIGIHGLRTGDGNGPLVNSRTGSIYIVKPKMHGPDEVAFTCELFSRVEDVLGLPQNTLKVGIMDEERRTTLNLKACIKAAADRVVFINTGFLDRTGDEIHTSMDAGPMIRKGAMKSTEWIAAYENQNVDIGLETGFSGRAQIGKGMWAMTDLMADMVEQKIGQPRAGATTAWVPSPTAATLHAMHYHEVDVFAVHNELAGTRRGTVDQLLTIPLAKELAWAPEEIREEVDNNCQSILGYVVRWIDAGVGCSKVPDIHDVALMEDRATLRISSQLLANWLRHGVITEEDVKASLRRMAAVVDEQNAADPDFRPMAPDPDGSIAFQAAQELILSGADQPNGYTEPILHRRRREFKAASNVG</sequence>